<gene>
    <name evidence="1" type="primary">pafA</name>
    <name type="ordered locus">Svir_21990</name>
</gene>
<dbReference type="EC" id="6.3.1.19" evidence="1"/>
<dbReference type="EMBL" id="CP001683">
    <property type="protein sequence ID" value="ACU97207.1"/>
    <property type="molecule type" value="Genomic_DNA"/>
</dbReference>
<dbReference type="RefSeq" id="WP_015786520.1">
    <property type="nucleotide sequence ID" value="NC_013159.1"/>
</dbReference>
<dbReference type="SMR" id="C7MWV3"/>
<dbReference type="STRING" id="471857.Svir_21990"/>
<dbReference type="MEROPS" id="U72.001"/>
<dbReference type="KEGG" id="svi:Svir_21990"/>
<dbReference type="eggNOG" id="COG0638">
    <property type="taxonomic scope" value="Bacteria"/>
</dbReference>
<dbReference type="HOGENOM" id="CLU_040524_0_1_11"/>
<dbReference type="UniPathway" id="UPA00997"/>
<dbReference type="UniPathway" id="UPA00998"/>
<dbReference type="Proteomes" id="UP000000841">
    <property type="component" value="Chromosome"/>
</dbReference>
<dbReference type="GO" id="GO:0005524">
    <property type="term" value="F:ATP binding"/>
    <property type="evidence" value="ECO:0007669"/>
    <property type="project" value="UniProtKB-UniRule"/>
</dbReference>
<dbReference type="GO" id="GO:0016879">
    <property type="term" value="F:ligase activity, forming carbon-nitrogen bonds"/>
    <property type="evidence" value="ECO:0007669"/>
    <property type="project" value="InterPro"/>
</dbReference>
<dbReference type="GO" id="GO:0000287">
    <property type="term" value="F:magnesium ion binding"/>
    <property type="evidence" value="ECO:0007669"/>
    <property type="project" value="UniProtKB-UniRule"/>
</dbReference>
<dbReference type="GO" id="GO:0019787">
    <property type="term" value="F:ubiquitin-like protein transferase activity"/>
    <property type="evidence" value="ECO:0007669"/>
    <property type="project" value="UniProtKB-UniRule"/>
</dbReference>
<dbReference type="GO" id="GO:0019941">
    <property type="term" value="P:modification-dependent protein catabolic process"/>
    <property type="evidence" value="ECO:0007669"/>
    <property type="project" value="UniProtKB-UniRule"/>
</dbReference>
<dbReference type="GO" id="GO:0010498">
    <property type="term" value="P:proteasomal protein catabolic process"/>
    <property type="evidence" value="ECO:0007669"/>
    <property type="project" value="UniProtKB-UniRule"/>
</dbReference>
<dbReference type="GO" id="GO:0070490">
    <property type="term" value="P:protein pupylation"/>
    <property type="evidence" value="ECO:0007669"/>
    <property type="project" value="UniProtKB-UniRule"/>
</dbReference>
<dbReference type="HAMAP" id="MF_02111">
    <property type="entry name" value="Pup_ligase"/>
    <property type="match status" value="1"/>
</dbReference>
<dbReference type="InterPro" id="IPR022279">
    <property type="entry name" value="Pup_ligase"/>
</dbReference>
<dbReference type="InterPro" id="IPR004347">
    <property type="entry name" value="Pup_ligase/deamidase"/>
</dbReference>
<dbReference type="NCBIfam" id="TIGR03686">
    <property type="entry name" value="pupylate_PafA"/>
    <property type="match status" value="1"/>
</dbReference>
<dbReference type="PANTHER" id="PTHR42307">
    <property type="entry name" value="PUP DEAMIDASE/DEPUPYLASE"/>
    <property type="match status" value="1"/>
</dbReference>
<dbReference type="PANTHER" id="PTHR42307:SF3">
    <property type="entry name" value="PUP--PROTEIN LIGASE"/>
    <property type="match status" value="1"/>
</dbReference>
<dbReference type="Pfam" id="PF03136">
    <property type="entry name" value="Pup_ligase"/>
    <property type="match status" value="1"/>
</dbReference>
<dbReference type="PIRSF" id="PIRSF018077">
    <property type="entry name" value="UCP018077"/>
    <property type="match status" value="1"/>
</dbReference>
<organism>
    <name type="scientific">Saccharomonospora viridis (strain ATCC 15386 / DSM 43017 / JCM 3036 / CCUG 5913 / NBRC 12207 / NCIMB 9602 / P101)</name>
    <name type="common">Thermoactinomyces viridis</name>
    <dbReference type="NCBI Taxonomy" id="471857"/>
    <lineage>
        <taxon>Bacteria</taxon>
        <taxon>Bacillati</taxon>
        <taxon>Actinomycetota</taxon>
        <taxon>Actinomycetes</taxon>
        <taxon>Pseudonocardiales</taxon>
        <taxon>Pseudonocardiaceae</taxon>
        <taxon>Saccharomonospora</taxon>
    </lineage>
</organism>
<reference key="1">
    <citation type="journal article" date="2009" name="Stand. Genomic Sci.">
        <title>Complete genome sequence of Saccharomonospora viridis type strain (P101).</title>
        <authorList>
            <person name="Pati A."/>
            <person name="Sikorski J."/>
            <person name="Nolan M."/>
            <person name="Lapidus A."/>
            <person name="Copeland A."/>
            <person name="Glavina Del Rio T."/>
            <person name="Lucas S."/>
            <person name="Chen F."/>
            <person name="Tice H."/>
            <person name="Pitluck S."/>
            <person name="Cheng J.F."/>
            <person name="Chertkov O."/>
            <person name="Brettin T."/>
            <person name="Han C."/>
            <person name="Detter J.C."/>
            <person name="Kuske C."/>
            <person name="Bruce D."/>
            <person name="Goodwin L."/>
            <person name="Chain P."/>
            <person name="D'haeseleer P."/>
            <person name="Chen A."/>
            <person name="Palaniappan K."/>
            <person name="Ivanova N."/>
            <person name="Mavromatis K."/>
            <person name="Mikhailova N."/>
            <person name="Rohde M."/>
            <person name="Tindall B.J."/>
            <person name="Goker M."/>
            <person name="Bristow J."/>
            <person name="Eisen J.A."/>
            <person name="Markowitz V."/>
            <person name="Hugenholtz P."/>
            <person name="Kyrpides N.C."/>
            <person name="Klenk H.P."/>
        </authorList>
    </citation>
    <scope>NUCLEOTIDE SEQUENCE [LARGE SCALE GENOMIC DNA]</scope>
    <source>
        <strain>ATCC 15386 / DSM 43017 / JCM 3036 / CCUG 5913 / NBRC 12207 / NCIMB 9602 / P101</strain>
    </source>
</reference>
<evidence type="ECO:0000255" key="1">
    <source>
        <dbReference type="HAMAP-Rule" id="MF_02111"/>
    </source>
</evidence>
<comment type="function">
    <text evidence="1">Catalyzes the covalent attachment of the prokaryotic ubiquitin-like protein modifier Pup to the proteasomal substrate proteins, thereby targeting them for proteasomal degradation. This tagging system is termed pupylation. The ligation reaction involves the side-chain carboxylate of the C-terminal glutamate of Pup and the side-chain amino group of a substrate lysine.</text>
</comment>
<comment type="catalytic activity">
    <reaction evidence="1">
        <text>ATP + [prokaryotic ubiquitin-like protein]-L-glutamate + [protein]-L-lysine = ADP + phosphate + N(6)-([prokaryotic ubiquitin-like protein]-gamma-L-glutamyl)-[protein]-L-lysine.</text>
        <dbReference type="EC" id="6.3.1.19"/>
    </reaction>
</comment>
<comment type="pathway">
    <text evidence="1">Protein degradation; proteasomal Pup-dependent pathway.</text>
</comment>
<comment type="pathway">
    <text evidence="1">Protein modification; protein pupylation.</text>
</comment>
<comment type="miscellaneous">
    <text evidence="1">The reaction mechanism probably proceeds via the activation of Pup by phosphorylation of its C-terminal glutamate, which is then subject to nucleophilic attack by the substrate lysine, resulting in an isopeptide bond and the release of phosphate as a good leaving group.</text>
</comment>
<comment type="similarity">
    <text evidence="1">Belongs to the Pup ligase/Pup deamidase family. Pup-conjugating enzyme subfamily.</text>
</comment>
<accession>C7MWV3</accession>
<sequence length="452" mass="51296">MQRRIFGIETEFGVTCTFHGQRRLSPDEVARYLFRRVVSWGRSSNVFLSNGSRLYLDVGSHPEYATAECDDLAQLVTHDKAGERILEDLLIDAERRLAEEGIGGDIFLFKNNTDSAGNSYGCHENYLVTRAGEFSRVADVLLPFLVTRQLVCGAGKVLQTPRGGVYCLSQRAEHIWEGVSSATTRSRPIINTRDEPHADAERYRRLHVIVGDSNMAEPTTLLKVGSVHLVLQMIEEGVQFRDFTLDNPIRAIREISHDLTGRRQVRLAGGREASALEIQREYYARAVQHVESGDPSPTTQYLIDLWGRALDAVEQQDFSSIDTEIDWAIKHRLVERYRSKHNLTLSDPRVAQLDLAYHDIRRGRGVFDLLQRKGMVRRITDDGEIELAKDSPPQTTRAKLRGDFIAAAQEAGRDFTVDWVHLKLNDQAQRTVLCKDPFRSVDERVERLINSL</sequence>
<feature type="chain" id="PRO_0000395950" description="Pup--protein ligase">
    <location>
        <begin position="1"/>
        <end position="452"/>
    </location>
</feature>
<feature type="active site" description="Proton acceptor" evidence="1">
    <location>
        <position position="57"/>
    </location>
</feature>
<feature type="binding site" evidence="1">
    <location>
        <position position="9"/>
    </location>
    <ligand>
        <name>Mg(2+)</name>
        <dbReference type="ChEBI" id="CHEBI:18420"/>
    </ligand>
</feature>
<feature type="binding site" evidence="1">
    <location>
        <position position="53"/>
    </location>
    <ligand>
        <name>ATP</name>
        <dbReference type="ChEBI" id="CHEBI:30616"/>
    </ligand>
</feature>
<feature type="binding site" evidence="1">
    <location>
        <position position="55"/>
    </location>
    <ligand>
        <name>Mg(2+)</name>
        <dbReference type="ChEBI" id="CHEBI:18420"/>
    </ligand>
</feature>
<feature type="binding site" evidence="1">
    <location>
        <position position="63"/>
    </location>
    <ligand>
        <name>Mg(2+)</name>
        <dbReference type="ChEBI" id="CHEBI:18420"/>
    </ligand>
</feature>
<feature type="binding site" evidence="1">
    <location>
        <position position="66"/>
    </location>
    <ligand>
        <name>ATP</name>
        <dbReference type="ChEBI" id="CHEBI:30616"/>
    </ligand>
</feature>
<feature type="binding site" evidence="1">
    <location>
        <position position="419"/>
    </location>
    <ligand>
        <name>ATP</name>
        <dbReference type="ChEBI" id="CHEBI:30616"/>
    </ligand>
</feature>
<proteinExistence type="inferred from homology"/>
<protein>
    <recommendedName>
        <fullName evidence="1">Pup--protein ligase</fullName>
        <ecNumber evidence="1">6.3.1.19</ecNumber>
    </recommendedName>
    <alternativeName>
        <fullName evidence="1">Proteasome accessory factor A</fullName>
    </alternativeName>
    <alternativeName>
        <fullName evidence="1">Pup-conjugating enzyme</fullName>
    </alternativeName>
</protein>
<keyword id="KW-0067">ATP-binding</keyword>
<keyword id="KW-0436">Ligase</keyword>
<keyword id="KW-0460">Magnesium</keyword>
<keyword id="KW-0479">Metal-binding</keyword>
<keyword id="KW-0547">Nucleotide-binding</keyword>
<keyword id="KW-1185">Reference proteome</keyword>
<keyword id="KW-0833">Ubl conjugation pathway</keyword>
<name>PAFA_SACVD</name>